<organism>
    <name type="scientific">Mus musculus</name>
    <name type="common">Mouse</name>
    <dbReference type="NCBI Taxonomy" id="10090"/>
    <lineage>
        <taxon>Eukaryota</taxon>
        <taxon>Metazoa</taxon>
        <taxon>Chordata</taxon>
        <taxon>Craniata</taxon>
        <taxon>Vertebrata</taxon>
        <taxon>Euteleostomi</taxon>
        <taxon>Mammalia</taxon>
        <taxon>Eutheria</taxon>
        <taxon>Euarchontoglires</taxon>
        <taxon>Glires</taxon>
        <taxon>Rodentia</taxon>
        <taxon>Myomorpha</taxon>
        <taxon>Muroidea</taxon>
        <taxon>Muridae</taxon>
        <taxon>Murinae</taxon>
        <taxon>Mus</taxon>
        <taxon>Mus</taxon>
    </lineage>
</organism>
<dbReference type="EC" id="3.6.1.29" evidence="1"/>
<dbReference type="EC" id="3.9.1.-" evidence="1"/>
<dbReference type="EC" id="3.6.2.1" evidence="1"/>
<dbReference type="EC" id="2.7.7.51" evidence="1"/>
<dbReference type="EMBL" id="AH006186">
    <property type="protein sequence ID" value="AAC23967.1"/>
    <property type="molecule type" value="Genomic_DNA"/>
</dbReference>
<dbReference type="EMBL" id="AF047699">
    <property type="protein sequence ID" value="AAC24566.1"/>
    <property type="molecule type" value="mRNA"/>
</dbReference>
<dbReference type="EMBL" id="AF055573">
    <property type="protein sequence ID" value="AAC24117.1"/>
    <property type="molecule type" value="mRNA"/>
</dbReference>
<dbReference type="EMBL" id="BC012662">
    <property type="protein sequence ID" value="AAH12662.1"/>
    <property type="molecule type" value="mRNA"/>
</dbReference>
<dbReference type="EMBL" id="AH013372">
    <property type="protein sequence ID" value="AAR17701.1"/>
    <property type="molecule type" value="Genomic_DNA"/>
</dbReference>
<dbReference type="CCDS" id="CCDS49400.1"/>
<dbReference type="RefSeq" id="NP_001295215.1">
    <property type="nucleotide sequence ID" value="NM_001308286.2"/>
</dbReference>
<dbReference type="RefSeq" id="NP_001347070.1">
    <property type="nucleotide sequence ID" value="NM_001360141.2"/>
</dbReference>
<dbReference type="RefSeq" id="NP_001411365.1">
    <property type="nucleotide sequence ID" value="NM_001424436.1"/>
</dbReference>
<dbReference type="RefSeq" id="NP_001411366.1">
    <property type="nucleotide sequence ID" value="NM_001424437.1"/>
</dbReference>
<dbReference type="RefSeq" id="NP_034340.1">
    <property type="nucleotide sequence ID" value="NM_010210.4"/>
</dbReference>
<dbReference type="RefSeq" id="XP_006517990.1">
    <property type="nucleotide sequence ID" value="XM_006517927.3"/>
</dbReference>
<dbReference type="RefSeq" id="XP_011243034.1">
    <property type="nucleotide sequence ID" value="XM_011244732.2"/>
</dbReference>
<dbReference type="RefSeq" id="XP_017171336.1">
    <property type="nucleotide sequence ID" value="XM_017315847.1"/>
</dbReference>
<dbReference type="RefSeq" id="XP_036014356.1">
    <property type="nucleotide sequence ID" value="XM_036158463.1"/>
</dbReference>
<dbReference type="RefSeq" id="XP_036014357.1">
    <property type="nucleotide sequence ID" value="XM_036158464.1"/>
</dbReference>
<dbReference type="SMR" id="O89106"/>
<dbReference type="BioGRID" id="199667">
    <property type="interactions" value="5"/>
</dbReference>
<dbReference type="FunCoup" id="O89106">
    <property type="interactions" value="1037"/>
</dbReference>
<dbReference type="STRING" id="10090.ENSMUSP00000124017"/>
<dbReference type="iPTMnet" id="O89106"/>
<dbReference type="PhosphoSitePlus" id="O89106"/>
<dbReference type="SwissPalm" id="O89106"/>
<dbReference type="jPOST" id="O89106"/>
<dbReference type="PaxDb" id="10090-ENSMUSP00000124017"/>
<dbReference type="ProteomicsDB" id="270987"/>
<dbReference type="Antibodypedia" id="3636">
    <property type="antibodies" value="631 antibodies from 39 providers"/>
</dbReference>
<dbReference type="DNASU" id="14198"/>
<dbReference type="Ensembl" id="ENSMUST00000161302.8">
    <property type="protein sequence ID" value="ENSMUSP00000123874.2"/>
    <property type="gene ID" value="ENSMUSG00000060579.14"/>
</dbReference>
<dbReference type="Ensembl" id="ENSMUST00000162278.8">
    <property type="protein sequence ID" value="ENSMUSP00000124073.2"/>
    <property type="gene ID" value="ENSMUSG00000060579.14"/>
</dbReference>
<dbReference type="Ensembl" id="ENSMUST00000179394.8">
    <property type="protein sequence ID" value="ENSMUSP00000136011.2"/>
    <property type="gene ID" value="ENSMUSG00000060579.14"/>
</dbReference>
<dbReference type="GeneID" id="14198"/>
<dbReference type="KEGG" id="mmu:14198"/>
<dbReference type="UCSC" id="uc007sfj.1">
    <property type="organism name" value="mouse"/>
</dbReference>
<dbReference type="AGR" id="MGI:1277947"/>
<dbReference type="CTD" id="2272"/>
<dbReference type="MGI" id="MGI:1277947">
    <property type="gene designation" value="Fhit"/>
</dbReference>
<dbReference type="VEuPathDB" id="HostDB:ENSMUSG00000060579"/>
<dbReference type="eggNOG" id="KOG3379">
    <property type="taxonomic scope" value="Eukaryota"/>
</dbReference>
<dbReference type="GeneTree" id="ENSGT00510000047967"/>
<dbReference type="InParanoid" id="O89106"/>
<dbReference type="OMA" id="DAIYGMM"/>
<dbReference type="OrthoDB" id="680339at2759"/>
<dbReference type="PhylomeDB" id="O89106"/>
<dbReference type="BioGRID-ORCS" id="14198">
    <property type="hits" value="2 hits in 78 CRISPR screens"/>
</dbReference>
<dbReference type="ChiTaRS" id="Fhit">
    <property type="organism name" value="mouse"/>
</dbReference>
<dbReference type="PRO" id="PR:O89106"/>
<dbReference type="Proteomes" id="UP000000589">
    <property type="component" value="Chromosome 14"/>
</dbReference>
<dbReference type="RNAct" id="O89106">
    <property type="molecule type" value="protein"/>
</dbReference>
<dbReference type="Bgee" id="ENSMUSG00000060579">
    <property type="expression patterns" value="Expressed in right kidney and 156 other cell types or tissues"/>
</dbReference>
<dbReference type="ExpressionAtlas" id="O89106">
    <property type="expression patterns" value="baseline and differential"/>
</dbReference>
<dbReference type="GO" id="GO:0005737">
    <property type="term" value="C:cytoplasm"/>
    <property type="evidence" value="ECO:0000314"/>
    <property type="project" value="UniProtKB"/>
</dbReference>
<dbReference type="GO" id="GO:0005829">
    <property type="term" value="C:cytosol"/>
    <property type="evidence" value="ECO:0000250"/>
    <property type="project" value="UniProtKB"/>
</dbReference>
<dbReference type="GO" id="GO:0005739">
    <property type="term" value="C:mitochondrion"/>
    <property type="evidence" value="ECO:0007669"/>
    <property type="project" value="UniProtKB-SubCell"/>
</dbReference>
<dbReference type="GO" id="GO:0005634">
    <property type="term" value="C:nucleus"/>
    <property type="evidence" value="ECO:0007669"/>
    <property type="project" value="UniProtKB-SubCell"/>
</dbReference>
<dbReference type="GO" id="GO:0043530">
    <property type="term" value="F:adenosine 5'-monophosphoramidase activity"/>
    <property type="evidence" value="ECO:0000250"/>
    <property type="project" value="UniProtKB"/>
</dbReference>
<dbReference type="GO" id="GO:0047627">
    <property type="term" value="F:adenylylsulfatase activity"/>
    <property type="evidence" value="ECO:0000250"/>
    <property type="project" value="UniProtKB"/>
</dbReference>
<dbReference type="GO" id="GO:0047352">
    <property type="term" value="F:adenylylsulfate-ammonia adenylyltransferase activity"/>
    <property type="evidence" value="ECO:0000250"/>
    <property type="project" value="UniProtKB"/>
</dbReference>
<dbReference type="GO" id="GO:0047710">
    <property type="term" value="F:bis(5'-adenosyl)-triphosphatase activity"/>
    <property type="evidence" value="ECO:0000250"/>
    <property type="project" value="UniProtKB"/>
</dbReference>
<dbReference type="GO" id="GO:0000166">
    <property type="term" value="F:nucleotide binding"/>
    <property type="evidence" value="ECO:0007669"/>
    <property type="project" value="UniProtKB-KW"/>
</dbReference>
<dbReference type="GO" id="GO:0015964">
    <property type="term" value="P:diadenosine triphosphate catabolic process"/>
    <property type="evidence" value="ECO:0000250"/>
    <property type="project" value="ARUK-UCL"/>
</dbReference>
<dbReference type="GO" id="GO:0006260">
    <property type="term" value="P:DNA replication"/>
    <property type="evidence" value="ECO:0000314"/>
    <property type="project" value="MGI"/>
</dbReference>
<dbReference type="GO" id="GO:0072332">
    <property type="term" value="P:intrinsic apoptotic signaling pathway by p53 class mediator"/>
    <property type="evidence" value="ECO:0000250"/>
    <property type="project" value="UniProtKB"/>
</dbReference>
<dbReference type="GO" id="GO:0032435">
    <property type="term" value="P:negative regulation of proteasomal ubiquitin-dependent protein catabolic process"/>
    <property type="evidence" value="ECO:0000250"/>
    <property type="project" value="UniProtKB"/>
</dbReference>
<dbReference type="GO" id="GO:0006163">
    <property type="term" value="P:purine nucleotide metabolic process"/>
    <property type="evidence" value="ECO:0000250"/>
    <property type="project" value="UniProtKB"/>
</dbReference>
<dbReference type="CDD" id="cd01275">
    <property type="entry name" value="FHIT"/>
    <property type="match status" value="1"/>
</dbReference>
<dbReference type="FunFam" id="3.30.428.10:FF:000011">
    <property type="entry name" value="Fragile histidine triad"/>
    <property type="match status" value="1"/>
</dbReference>
<dbReference type="Gene3D" id="3.30.428.10">
    <property type="entry name" value="HIT-like"/>
    <property type="match status" value="1"/>
</dbReference>
<dbReference type="InterPro" id="IPR052677">
    <property type="entry name" value="Dinucleoside_ppp_hydrolase"/>
</dbReference>
<dbReference type="InterPro" id="IPR039383">
    <property type="entry name" value="FHIT"/>
</dbReference>
<dbReference type="InterPro" id="IPR019808">
    <property type="entry name" value="Histidine_triad_CS"/>
</dbReference>
<dbReference type="InterPro" id="IPR011146">
    <property type="entry name" value="HIT-like"/>
</dbReference>
<dbReference type="InterPro" id="IPR036265">
    <property type="entry name" value="HIT-like_sf"/>
</dbReference>
<dbReference type="PANTHER" id="PTHR46981">
    <property type="entry name" value="BIS(5'-ADENOSYL)-TRIPHOSPHATASE"/>
    <property type="match status" value="1"/>
</dbReference>
<dbReference type="PANTHER" id="PTHR46981:SF1">
    <property type="entry name" value="BIS(5'-ADENOSYL)-TRIPHOSPHATASE"/>
    <property type="match status" value="1"/>
</dbReference>
<dbReference type="Pfam" id="PF01230">
    <property type="entry name" value="HIT"/>
    <property type="match status" value="1"/>
</dbReference>
<dbReference type="SUPFAM" id="SSF54197">
    <property type="entry name" value="HIT-like"/>
    <property type="match status" value="1"/>
</dbReference>
<dbReference type="PROSITE" id="PS00892">
    <property type="entry name" value="HIT_1"/>
    <property type="match status" value="1"/>
</dbReference>
<dbReference type="PROSITE" id="PS51084">
    <property type="entry name" value="HIT_2"/>
    <property type="match status" value="1"/>
</dbReference>
<protein>
    <recommendedName>
        <fullName>Bis(5'-adenosyl)-triphosphatase</fullName>
        <ecNumber evidence="1">3.6.1.29</ecNumber>
    </recommendedName>
    <alternativeName>
        <fullName>AP3A hydrolase</fullName>
        <shortName>AP3Aase</shortName>
    </alternativeName>
    <alternativeName>
        <fullName evidence="1">Adenosine 5'-monophosphoramidase FHIT</fullName>
        <ecNumber evidence="1">3.9.1.-</ecNumber>
    </alternativeName>
    <alternativeName>
        <fullName>Adenylylsulfatase</fullName>
        <ecNumber evidence="1">3.6.2.1</ecNumber>
    </alternativeName>
    <alternativeName>
        <fullName>Adenylylsulfate-ammonia adenylyltransferase</fullName>
        <ecNumber evidence="1">2.7.7.51</ecNumber>
    </alternativeName>
    <alternativeName>
        <fullName>Diadenosine 5',5'''-P1,P3-triphosphate hydrolase</fullName>
    </alternativeName>
    <alternativeName>
        <fullName>Dinucleosidetriphosphatase</fullName>
    </alternativeName>
    <alternativeName>
        <fullName>Fragile histidine triad protein</fullName>
    </alternativeName>
</protein>
<feature type="chain" id="PRO_0000109790" description="Bis(5'-adenosyl)-triphosphatase">
    <location>
        <begin position="1"/>
        <end position="150"/>
    </location>
</feature>
<feature type="domain" description="HIT" evidence="2">
    <location>
        <begin position="2"/>
        <end position="109"/>
    </location>
</feature>
<feature type="short sequence motif" description="Histidine triad motif" evidence="2">
    <location>
        <begin position="94"/>
        <end position="98"/>
    </location>
</feature>
<feature type="active site" description="Tele-AMP-histidine intermediate" evidence="1">
    <location>
        <position position="96"/>
    </location>
</feature>
<feature type="binding site" evidence="1">
    <location>
        <position position="8"/>
    </location>
    <ligand>
        <name>substrate</name>
    </ligand>
</feature>
<feature type="binding site" evidence="1">
    <location>
        <position position="27"/>
    </location>
    <ligand>
        <name>substrate</name>
    </ligand>
</feature>
<feature type="binding site" evidence="1">
    <location>
        <position position="83"/>
    </location>
    <ligand>
        <name>substrate</name>
    </ligand>
</feature>
<feature type="binding site" evidence="1">
    <location>
        <begin position="89"/>
        <end position="92"/>
    </location>
    <ligand>
        <name>substrate</name>
    </ligand>
</feature>
<feature type="binding site" evidence="1">
    <location>
        <position position="98"/>
    </location>
    <ligand>
        <name>substrate</name>
    </ligand>
</feature>
<feature type="site" description="Important for induction of apoptosis" evidence="1">
    <location>
        <position position="114"/>
    </location>
</feature>
<feature type="modified residue" description="Phosphotyrosine; by SRC" evidence="1">
    <location>
        <position position="114"/>
    </location>
</feature>
<feature type="modified residue" description="Phosphotyrosine" evidence="1">
    <location>
        <position position="147"/>
    </location>
</feature>
<feature type="sequence conflict" description="In Ref. 3; AAH12662." evidence="7" ref="3">
    <original>K</original>
    <variation>E</variation>
    <location>
        <position position="135"/>
    </location>
</feature>
<accession>O89106</accession>
<accession>Q6URW5</accession>
<accession>Q91VL1</accession>
<comment type="function">
    <text evidence="1 3 4">Possesses dinucleoside triphosphate hydrolase activity (By similarity). Cleaves P(1)-P(3)-bis(5'-adenosyl) triphosphate (Ap3A) to yield AMP and ADP (By similarity). Can also hydrolyze P(1)-P(4)-bis(5'-adenosyl) tetraphosphate (Ap4A), but has extremely low activity with ATP (By similarity). Exhibits adenylylsulfatase activity, hydrolyzing adenosine 5'-phosphosulfate to yield AMP and sulfate (By similarity). Exhibits adenosine 5'-monophosphoramidase activity, hydrolyzing purine nucleotide phosphoramidates with a single phosphate group such as adenosine 5'monophosphoramidate (AMP-NH2) to yield AMP and NH2 (By similarity). Exhibits adenylylsulfate-ammonia adenylyltransferase, catalyzing the ammonolysis of adenosine 5'-phosphosulfate resulting in the formation of adenosine 5'-phosphoramidate (By similarity). Also catalyzes the ammonolysis of adenosine 5-phosphorofluoridate and diadenosine triphosphate (By similarity). Modulates transcriptional activation by CTNNB1 and thereby contributes to regulate the expression of genes essential for cell proliferation and survival, such as CCND1 and BIRC5 (By similarity). Plays a role in the induction of apoptosis via SRC and AKT1 signaling pathways (By similarity). Inhibits MDM2-mediated proteasomal degradation of p53/TP53 and thereby plays a role in p53/TP53-mediated apoptosis (By similarity). Induction of apoptosis depends on the ability of FHIT to bind P(1)-P(3)-bis(5'-adenosyl) triphosphate or related compounds, but does not require its catalytic activity (By similarity). Functions as a tumor suppressor (PubMed:10758156, PubMed:11517343).</text>
</comment>
<comment type="catalytic activity">
    <reaction evidence="1">
        <text>P(1),P(3)-bis(5'-adenosyl) triphosphate + H2O = AMP + ADP + 2 H(+)</text>
        <dbReference type="Rhea" id="RHEA:13893"/>
        <dbReference type="ChEBI" id="CHEBI:15377"/>
        <dbReference type="ChEBI" id="CHEBI:15378"/>
        <dbReference type="ChEBI" id="CHEBI:58529"/>
        <dbReference type="ChEBI" id="CHEBI:456215"/>
        <dbReference type="ChEBI" id="CHEBI:456216"/>
        <dbReference type="EC" id="3.6.1.29"/>
    </reaction>
</comment>
<comment type="catalytic activity">
    <reaction evidence="1">
        <text>adenosine 5'-phosphosulfate + H2O = sulfate + AMP + 2 H(+)</text>
        <dbReference type="Rhea" id="RHEA:17041"/>
        <dbReference type="ChEBI" id="CHEBI:15377"/>
        <dbReference type="ChEBI" id="CHEBI:15378"/>
        <dbReference type="ChEBI" id="CHEBI:16189"/>
        <dbReference type="ChEBI" id="CHEBI:58243"/>
        <dbReference type="ChEBI" id="CHEBI:456215"/>
        <dbReference type="EC" id="3.6.2.1"/>
    </reaction>
</comment>
<comment type="catalytic activity">
    <reaction evidence="1">
        <text>adenosine 5'-phosphosulfate + NH4(+) = adenosine 5'-phosphoramidate + sulfate + 2 H(+)</text>
        <dbReference type="Rhea" id="RHEA:19197"/>
        <dbReference type="ChEBI" id="CHEBI:15378"/>
        <dbReference type="ChEBI" id="CHEBI:16189"/>
        <dbReference type="ChEBI" id="CHEBI:28938"/>
        <dbReference type="ChEBI" id="CHEBI:57890"/>
        <dbReference type="ChEBI" id="CHEBI:58243"/>
        <dbReference type="EC" id="2.7.7.51"/>
    </reaction>
</comment>
<comment type="catalytic activity">
    <reaction evidence="1">
        <text>adenosine 5'-phosphoramidate + H2O = AMP + NH4(+)</text>
        <dbReference type="Rhea" id="RHEA:67916"/>
        <dbReference type="ChEBI" id="CHEBI:15377"/>
        <dbReference type="ChEBI" id="CHEBI:28938"/>
        <dbReference type="ChEBI" id="CHEBI:57890"/>
        <dbReference type="ChEBI" id="CHEBI:456215"/>
    </reaction>
</comment>
<comment type="subunit">
    <text evidence="1">Homodimer. Interacts with UBE2I. Interacts with MDM2. Interacts with CTNNB1. Identified in a complex with CTNNB1 and LEF1 (By similarity).</text>
</comment>
<comment type="subcellular location">
    <subcellularLocation>
        <location evidence="6">Cytoplasm</location>
    </subcellularLocation>
    <subcellularLocation>
        <location evidence="1">Nucleus</location>
    </subcellularLocation>
    <subcellularLocation>
        <location evidence="1">Mitochondrion</location>
    </subcellularLocation>
</comment>
<comment type="tissue specificity">
    <text evidence="5 6">Expressed in heart, brain, lung and skeletal muscle. Particularly strong expression in liver, testis and kidney, where it is confined to the tubular epithelium.</text>
</comment>
<comment type="PTM">
    <text evidence="1">Phosphorylation at Tyr-114 by SRC is required for induction of apoptosis.</text>
</comment>
<comment type="disruption phenotype">
    <text evidence="3 4">No visible phenotype at birth, but about 30% of the mice lacking one or both copies of Fhit died for unknown reasons at an age of about 19 months. This might be due to increased susceptibility to infections. Mice lacking one or both copies of Fhit show increased susceptibility to carcinogens.</text>
</comment>
<name>FHIT_MOUSE</name>
<proteinExistence type="evidence at protein level"/>
<keyword id="KW-0053">Apoptosis</keyword>
<keyword id="KW-0963">Cytoplasm</keyword>
<keyword id="KW-0378">Hydrolase</keyword>
<keyword id="KW-0460">Magnesium</keyword>
<keyword id="KW-0464">Manganese</keyword>
<keyword id="KW-0496">Mitochondrion</keyword>
<keyword id="KW-0547">Nucleotide-binding</keyword>
<keyword id="KW-0539">Nucleus</keyword>
<keyword id="KW-0597">Phosphoprotein</keyword>
<keyword id="KW-1185">Reference proteome</keyword>
<keyword id="KW-0804">Transcription</keyword>
<keyword id="KW-0805">Transcription regulation</keyword>
<keyword id="KW-0808">Transferase</keyword>
<sequence length="150" mass="17235">MSFRFGQHLIKPSVVFLKTELSFALVNRKPVVPGHVLVCPLRPVERFRDLHPDEVADLFQVTQRVGTVVEKHFQGTSITFSMQDGPEAGQTVKHVHVHVLPRKAGDFPRNDNIYDELQKHDREEEDSPAFWRSEKEMAAEAEALRVYFQA</sequence>
<evidence type="ECO:0000250" key="1">
    <source>
        <dbReference type="UniProtKB" id="P49789"/>
    </source>
</evidence>
<evidence type="ECO:0000255" key="2">
    <source>
        <dbReference type="PROSITE-ProRule" id="PRU00464"/>
    </source>
</evidence>
<evidence type="ECO:0000269" key="3">
    <source>
    </source>
</evidence>
<evidence type="ECO:0000269" key="4">
    <source>
    </source>
</evidence>
<evidence type="ECO:0000269" key="5">
    <source>
    </source>
</evidence>
<evidence type="ECO:0000269" key="6">
    <source>
    </source>
</evidence>
<evidence type="ECO:0000305" key="7"/>
<gene>
    <name type="primary">Fhit</name>
</gene>
<reference key="1">
    <citation type="journal article" date="1998" name="Cancer Res.">
        <title>The murine Fhit locus: isolation, characterization, and expression in normal and tumor cells.</title>
        <authorList>
            <person name="Pekarsky Y."/>
            <person name="Druck T."/>
            <person name="Cotticelli M.G."/>
            <person name="Ohta M."/>
            <person name="Shou J."/>
            <person name="Mendrola J."/>
            <person name="Montgomery J.C."/>
            <person name="Buchberg A.M."/>
            <person name="Siracusa L.D."/>
            <person name="Manenti G."/>
            <person name="Fong L.Y."/>
            <person name="Dragani T.A."/>
            <person name="Croce C.M."/>
            <person name="Huebner K."/>
        </authorList>
    </citation>
    <scope>NUCLEOTIDE SEQUENCE [GENOMIC DNA / MRNA]</scope>
    <scope>SUBCELLULAR LOCATION</scope>
    <scope>TISSUE SPECIFICITY</scope>
</reference>
<reference key="2">
    <citation type="submission" date="1998-03" db="EMBL/GenBank/DDBJ databases">
        <authorList>
            <person name="Glover T.W."/>
            <person name="Hoge A."/>
            <person name="Miller D.E."/>
            <person name="Escara-Wilke J."/>
            <person name="Adam A.N."/>
            <person name="Dagenais S.L."/>
            <person name="Wilke C.M."/>
            <person name="Dierick H.A."/>
            <person name="Beer D.G."/>
        </authorList>
    </citation>
    <scope>NUCLEOTIDE SEQUENCE [MRNA]</scope>
    <source>
        <strain>C57BL/10J</strain>
        <tissue>Muscle</tissue>
    </source>
</reference>
<reference key="3">
    <citation type="journal article" date="2004" name="Genome Res.">
        <title>The status, quality, and expansion of the NIH full-length cDNA project: the Mammalian Gene Collection (MGC).</title>
        <authorList>
            <consortium name="The MGC Project Team"/>
        </authorList>
    </citation>
    <scope>NUCLEOTIDE SEQUENCE [LARGE SCALE MRNA]</scope>
    <source>
        <strain>FVB/N</strain>
        <tissue>Mammary gland</tissue>
    </source>
</reference>
<reference key="4">
    <citation type="journal article" date="2003" name="Proc. Natl. Acad. Sci. U.S.A.">
        <title>Fragile site orthologs FHIT/FRA3B and Fhit/Fra14A2: evolutionarily conserved but highly recombinogenic.</title>
        <authorList>
            <person name="Matsuyama A."/>
            <person name="Shiraishi T."/>
            <person name="Trapasso F."/>
            <person name="Kuroki T."/>
            <person name="Alder H."/>
            <person name="Mori M."/>
            <person name="Huebner K."/>
            <person name="Croce C.M."/>
        </authorList>
    </citation>
    <scope>NUCLEOTIDE SEQUENCE [GENOMIC DNA] OF 36-150</scope>
    <source>
        <strain>C57BL/6J</strain>
        <tissue>Kidney</tissue>
    </source>
</reference>
<reference key="5">
    <citation type="journal article" date="1998" name="Proc. Natl. Acad. Sci. U.S.A.">
        <title>Nitrilase and Fhit homologs are encoded as fusion proteins in Drosophila melanogaster and Caenorhabditis elegans.</title>
        <authorList>
            <person name="Pekarsky Y."/>
            <person name="Campiglio M."/>
            <person name="Siprashvili Z."/>
            <person name="Druck T."/>
            <person name="Sedkov Y."/>
            <person name="Tillib S."/>
            <person name="Draganescu A."/>
            <person name="Wermuth P."/>
            <person name="Rothman J.H."/>
            <person name="Huebner K."/>
            <person name="Buchberg A.M."/>
            <person name="Mazo A."/>
            <person name="Brenner C."/>
            <person name="Croce C.M."/>
        </authorList>
    </citation>
    <scope>TISSUE SPECIFICITY</scope>
</reference>
<reference key="6">
    <citation type="journal article" date="2000" name="Proc. Natl. Acad. Sci. U.S.A.">
        <title>Muir-Torre-like syndrome in Fhit-deficient mice.</title>
        <authorList>
            <person name="Fong L.Y."/>
            <person name="Fidanza V."/>
            <person name="Zanesi N."/>
            <person name="Lock L.F."/>
            <person name="Siracusa L.D."/>
            <person name="Mancini R."/>
            <person name="Siprashvili Z."/>
            <person name="Ottey M."/>
            <person name="Martin S.E."/>
            <person name="Druck T."/>
            <person name="McCue P.A."/>
            <person name="Croce C.M."/>
            <person name="Huebner K."/>
        </authorList>
    </citation>
    <scope>DISRUPTION PHENOTYPE</scope>
    <scope>FUNCTION</scope>
</reference>
<reference key="7">
    <citation type="journal article" date="2001" name="Proc. Natl. Acad. Sci. U.S.A.">
        <title>The tumor spectrum in FHIT-deficient mice.</title>
        <authorList>
            <person name="Zanesi N."/>
            <person name="Fidanza V."/>
            <person name="Fong L.Y."/>
            <person name="Mancini R."/>
            <person name="Druck T."/>
            <person name="Valtieri M."/>
            <person name="Rudiger T."/>
            <person name="McCue P.A."/>
            <person name="Croce C.M."/>
            <person name="Huebner K."/>
        </authorList>
    </citation>
    <scope>DISRUPTION PHENOTYPE</scope>
    <scope>FUNCTION</scope>
</reference>
<reference key="8">
    <citation type="journal article" date="2010" name="Cell">
        <title>A tissue-specific atlas of mouse protein phosphorylation and expression.</title>
        <authorList>
            <person name="Huttlin E.L."/>
            <person name="Jedrychowski M.P."/>
            <person name="Elias J.E."/>
            <person name="Goswami T."/>
            <person name="Rad R."/>
            <person name="Beausoleil S.A."/>
            <person name="Villen J."/>
            <person name="Haas W."/>
            <person name="Sowa M.E."/>
            <person name="Gygi S.P."/>
        </authorList>
    </citation>
    <scope>IDENTIFICATION BY MASS SPECTROMETRY [LARGE SCALE ANALYSIS]</scope>
    <source>
        <tissue>Brain</tissue>
        <tissue>Brown adipose tissue</tissue>
        <tissue>Kidney</tissue>
        <tissue>Liver</tissue>
    </source>
</reference>